<dbReference type="EMBL" id="CP000435">
    <property type="protein sequence ID" value="ABI47008.1"/>
    <property type="molecule type" value="Genomic_DNA"/>
</dbReference>
<dbReference type="SMR" id="Q0I733"/>
<dbReference type="STRING" id="64471.sync_2550"/>
<dbReference type="KEGG" id="syg:sync_2550"/>
<dbReference type="HOGENOM" id="CLU_219686_0_0_3"/>
<dbReference type="Proteomes" id="UP000001961">
    <property type="component" value="Chromosome"/>
</dbReference>
<dbReference type="GO" id="GO:0031676">
    <property type="term" value="C:plasma membrane-derived thylakoid membrane"/>
    <property type="evidence" value="ECO:0007669"/>
    <property type="project" value="UniProtKB-SubCell"/>
</dbReference>
<dbReference type="GO" id="GO:0015979">
    <property type="term" value="P:photosynthesis"/>
    <property type="evidence" value="ECO:0007669"/>
    <property type="project" value="UniProtKB-KW"/>
</dbReference>
<feature type="chain" id="PRO_0000278084" description="Cytochrome b6-f complex subunit 6">
    <location>
        <begin position="1"/>
        <end position="37"/>
    </location>
</feature>
<feature type="transmembrane region" description="Helical" evidence="2">
    <location>
        <begin position="7"/>
        <end position="27"/>
    </location>
</feature>
<keyword id="KW-0249">Electron transport</keyword>
<keyword id="KW-0472">Membrane</keyword>
<keyword id="KW-0602">Photosynthesis</keyword>
<keyword id="KW-1185">Reference proteome</keyword>
<keyword id="KW-0793">Thylakoid</keyword>
<keyword id="KW-0812">Transmembrane</keyword>
<keyword id="KW-1133">Transmembrane helix</keyword>
<keyword id="KW-0813">Transport</keyword>
<organism>
    <name type="scientific">Synechococcus sp. (strain CC9311)</name>
    <dbReference type="NCBI Taxonomy" id="64471"/>
    <lineage>
        <taxon>Bacteria</taxon>
        <taxon>Bacillati</taxon>
        <taxon>Cyanobacteriota</taxon>
        <taxon>Cyanophyceae</taxon>
        <taxon>Synechococcales</taxon>
        <taxon>Synechococcaceae</taxon>
        <taxon>Synechococcus</taxon>
    </lineage>
</organism>
<reference key="1">
    <citation type="journal article" date="2006" name="Proc. Natl. Acad. Sci. U.S.A.">
        <title>Genome sequence of Synechococcus CC9311: insights into adaptation to a coastal environment.</title>
        <authorList>
            <person name="Palenik B."/>
            <person name="Ren Q."/>
            <person name="Dupont C.L."/>
            <person name="Myers G.S."/>
            <person name="Heidelberg J.F."/>
            <person name="Badger J.H."/>
            <person name="Madupu R."/>
            <person name="Nelson W.C."/>
            <person name="Brinkac L.M."/>
            <person name="Dodson R.J."/>
            <person name="Durkin A.S."/>
            <person name="Daugherty S.C."/>
            <person name="Sullivan S.A."/>
            <person name="Khouri H."/>
            <person name="Mohamoud Y."/>
            <person name="Halpin R."/>
            <person name="Paulsen I.T."/>
        </authorList>
    </citation>
    <scope>NUCLEOTIDE SEQUENCE [LARGE SCALE GENOMIC DNA]</scope>
    <source>
        <strain>CC9311</strain>
    </source>
</reference>
<evidence type="ECO:0000250" key="1"/>
<evidence type="ECO:0000255" key="2"/>
<evidence type="ECO:0000305" key="3"/>
<accession>Q0I733</accession>
<comment type="function">
    <text evidence="1">Component of the cytochrome b6-f complex, which mediates electron transfer between photosystem II (PSII) and photosystem I (PSI), cyclic electron flow around PSI, and state transitions. PetL is important for photoautotrophic growth as well as for electron transfer efficiency and stability of the cytochrome b6-f complex (By similarity).</text>
</comment>
<comment type="subunit">
    <text evidence="1">The 4 large subunits of the cytochrome b6-f complex are cytochrome b6, subunit IV (17 kDa polypeptide, PetD), cytochrome f and the Rieske protein, while the 4 small subunits are PetG, PetL, PetM and PetN. The complex functions as a dimer (By similarity).</text>
</comment>
<comment type="subcellular location">
    <subcellularLocation>
        <location evidence="1">Cellular thylakoid membrane</location>
        <topology evidence="1">Single-pass membrane protein</topology>
    </subcellularLocation>
</comment>
<comment type="similarity">
    <text evidence="3">Belongs to the PetL family.</text>
</comment>
<sequence length="37" mass="3839">MLQSVSVMGVVIYLGLVGAGLVAAFAFSTLLRSIKLI</sequence>
<name>PETL_SYNS3</name>
<gene>
    <name type="primary">petL</name>
    <name type="ordered locus">sync_2550</name>
</gene>
<proteinExistence type="inferred from homology"/>
<protein>
    <recommendedName>
        <fullName>Cytochrome b6-f complex subunit 6</fullName>
    </recommendedName>
    <alternativeName>
        <fullName>Cytochrome b6-f complex subunit PetL</fullName>
    </alternativeName>
    <alternativeName>
        <fullName>Cytochrome b6-f complex subunit VI</fullName>
    </alternativeName>
</protein>